<protein>
    <recommendedName>
        <fullName evidence="1">DNA-directed RNA polymerase subunit beta'</fullName>
        <shortName evidence="1">RNAP subunit beta'</shortName>
        <ecNumber evidence="1">2.7.7.6</ecNumber>
    </recommendedName>
    <alternativeName>
        <fullName evidence="1">RNA polymerase subunit beta'</fullName>
    </alternativeName>
    <alternativeName>
        <fullName evidence="1">Transcriptase subunit beta'</fullName>
    </alternativeName>
</protein>
<comment type="function">
    <text evidence="1">DNA-dependent RNA polymerase catalyzes the transcription of DNA into RNA using the four ribonucleoside triphosphates as substrates.</text>
</comment>
<comment type="catalytic activity">
    <reaction evidence="1">
        <text>RNA(n) + a ribonucleoside 5'-triphosphate = RNA(n+1) + diphosphate</text>
        <dbReference type="Rhea" id="RHEA:21248"/>
        <dbReference type="Rhea" id="RHEA-COMP:14527"/>
        <dbReference type="Rhea" id="RHEA-COMP:17342"/>
        <dbReference type="ChEBI" id="CHEBI:33019"/>
        <dbReference type="ChEBI" id="CHEBI:61557"/>
        <dbReference type="ChEBI" id="CHEBI:140395"/>
        <dbReference type="EC" id="2.7.7.6"/>
    </reaction>
</comment>
<comment type="cofactor">
    <cofactor evidence="1">
        <name>Mg(2+)</name>
        <dbReference type="ChEBI" id="CHEBI:18420"/>
    </cofactor>
    <text evidence="1">Binds 1 Mg(2+) ion per subunit.</text>
</comment>
<comment type="cofactor">
    <cofactor evidence="1">
        <name>Zn(2+)</name>
        <dbReference type="ChEBI" id="CHEBI:29105"/>
    </cofactor>
    <text evidence="1">Binds 2 Zn(2+) ions per subunit.</text>
</comment>
<comment type="subunit">
    <text evidence="1">The RNAP catalytic core consists of 2 alpha, 1 beta, 1 beta' and 1 omega subunit. When a sigma factor is associated with the core the holoenzyme is formed, which can initiate transcription.</text>
</comment>
<comment type="similarity">
    <text evidence="1">Belongs to the RNA polymerase beta' chain family.</text>
</comment>
<dbReference type="EC" id="2.7.7.6" evidence="1"/>
<dbReference type="EMBL" id="CP000766">
    <property type="protein sequence ID" value="ABY72136.1"/>
    <property type="molecule type" value="Genomic_DNA"/>
</dbReference>
<dbReference type="RefSeq" id="WP_012150398.1">
    <property type="nucleotide sequence ID" value="NC_010263.3"/>
</dbReference>
<dbReference type="SMR" id="B0BWB0"/>
<dbReference type="GeneID" id="79936974"/>
<dbReference type="KEGG" id="rrj:RrIowa_0224"/>
<dbReference type="eggNOG" id="COG0086">
    <property type="taxonomic scope" value="Bacteria"/>
</dbReference>
<dbReference type="HOGENOM" id="CLU_000524_3_1_5"/>
<dbReference type="Proteomes" id="UP000000796">
    <property type="component" value="Chromosome"/>
</dbReference>
<dbReference type="GO" id="GO:0000428">
    <property type="term" value="C:DNA-directed RNA polymerase complex"/>
    <property type="evidence" value="ECO:0007669"/>
    <property type="project" value="UniProtKB-KW"/>
</dbReference>
<dbReference type="GO" id="GO:0003677">
    <property type="term" value="F:DNA binding"/>
    <property type="evidence" value="ECO:0007669"/>
    <property type="project" value="UniProtKB-UniRule"/>
</dbReference>
<dbReference type="GO" id="GO:0003899">
    <property type="term" value="F:DNA-directed RNA polymerase activity"/>
    <property type="evidence" value="ECO:0007669"/>
    <property type="project" value="UniProtKB-UniRule"/>
</dbReference>
<dbReference type="GO" id="GO:0000287">
    <property type="term" value="F:magnesium ion binding"/>
    <property type="evidence" value="ECO:0007669"/>
    <property type="project" value="UniProtKB-UniRule"/>
</dbReference>
<dbReference type="GO" id="GO:0008270">
    <property type="term" value="F:zinc ion binding"/>
    <property type="evidence" value="ECO:0007669"/>
    <property type="project" value="UniProtKB-UniRule"/>
</dbReference>
<dbReference type="GO" id="GO:0006351">
    <property type="term" value="P:DNA-templated transcription"/>
    <property type="evidence" value="ECO:0007669"/>
    <property type="project" value="UniProtKB-UniRule"/>
</dbReference>
<dbReference type="CDD" id="cd02655">
    <property type="entry name" value="RNAP_beta'_C"/>
    <property type="match status" value="1"/>
</dbReference>
<dbReference type="CDD" id="cd01609">
    <property type="entry name" value="RNAP_beta'_N"/>
    <property type="match status" value="1"/>
</dbReference>
<dbReference type="FunFam" id="1.10.150.390:FF:000002">
    <property type="entry name" value="DNA-directed RNA polymerase subunit beta"/>
    <property type="match status" value="1"/>
</dbReference>
<dbReference type="Gene3D" id="1.10.132.30">
    <property type="match status" value="1"/>
</dbReference>
<dbReference type="Gene3D" id="1.10.150.390">
    <property type="match status" value="1"/>
</dbReference>
<dbReference type="Gene3D" id="1.10.1790.20">
    <property type="match status" value="1"/>
</dbReference>
<dbReference type="Gene3D" id="1.10.40.90">
    <property type="match status" value="1"/>
</dbReference>
<dbReference type="Gene3D" id="2.40.40.20">
    <property type="match status" value="1"/>
</dbReference>
<dbReference type="Gene3D" id="2.40.50.100">
    <property type="match status" value="3"/>
</dbReference>
<dbReference type="Gene3D" id="4.10.860.120">
    <property type="entry name" value="RNA polymerase II, clamp domain"/>
    <property type="match status" value="1"/>
</dbReference>
<dbReference type="Gene3D" id="1.10.274.100">
    <property type="entry name" value="RNA polymerase Rpb1, domain 3"/>
    <property type="match status" value="2"/>
</dbReference>
<dbReference type="HAMAP" id="MF_01322">
    <property type="entry name" value="RNApol_bact_RpoC"/>
    <property type="match status" value="1"/>
</dbReference>
<dbReference type="InterPro" id="IPR045867">
    <property type="entry name" value="DNA-dir_RpoC_beta_prime"/>
</dbReference>
<dbReference type="InterPro" id="IPR012754">
    <property type="entry name" value="DNA-dir_RpoC_beta_prime_bact"/>
</dbReference>
<dbReference type="InterPro" id="IPR000722">
    <property type="entry name" value="RNA_pol_asu"/>
</dbReference>
<dbReference type="InterPro" id="IPR006592">
    <property type="entry name" value="RNA_pol_N"/>
</dbReference>
<dbReference type="InterPro" id="IPR007080">
    <property type="entry name" value="RNA_pol_Rpb1_1"/>
</dbReference>
<dbReference type="InterPro" id="IPR007066">
    <property type="entry name" value="RNA_pol_Rpb1_3"/>
</dbReference>
<dbReference type="InterPro" id="IPR042102">
    <property type="entry name" value="RNA_pol_Rpb1_3_sf"/>
</dbReference>
<dbReference type="InterPro" id="IPR007083">
    <property type="entry name" value="RNA_pol_Rpb1_4"/>
</dbReference>
<dbReference type="InterPro" id="IPR007081">
    <property type="entry name" value="RNA_pol_Rpb1_5"/>
</dbReference>
<dbReference type="InterPro" id="IPR044893">
    <property type="entry name" value="RNA_pol_Rpb1_clamp_domain"/>
</dbReference>
<dbReference type="InterPro" id="IPR038120">
    <property type="entry name" value="Rpb1_funnel_sf"/>
</dbReference>
<dbReference type="NCBIfam" id="TIGR02386">
    <property type="entry name" value="rpoC_TIGR"/>
    <property type="match status" value="1"/>
</dbReference>
<dbReference type="PANTHER" id="PTHR19376">
    <property type="entry name" value="DNA-DIRECTED RNA POLYMERASE"/>
    <property type="match status" value="1"/>
</dbReference>
<dbReference type="PANTHER" id="PTHR19376:SF54">
    <property type="entry name" value="DNA-DIRECTED RNA POLYMERASE SUBUNIT BETA"/>
    <property type="match status" value="1"/>
</dbReference>
<dbReference type="Pfam" id="PF04997">
    <property type="entry name" value="RNA_pol_Rpb1_1"/>
    <property type="match status" value="1"/>
</dbReference>
<dbReference type="Pfam" id="PF00623">
    <property type="entry name" value="RNA_pol_Rpb1_2"/>
    <property type="match status" value="2"/>
</dbReference>
<dbReference type="Pfam" id="PF04983">
    <property type="entry name" value="RNA_pol_Rpb1_3"/>
    <property type="match status" value="1"/>
</dbReference>
<dbReference type="Pfam" id="PF05000">
    <property type="entry name" value="RNA_pol_Rpb1_4"/>
    <property type="match status" value="1"/>
</dbReference>
<dbReference type="Pfam" id="PF04998">
    <property type="entry name" value="RNA_pol_Rpb1_5"/>
    <property type="match status" value="1"/>
</dbReference>
<dbReference type="SMART" id="SM00663">
    <property type="entry name" value="RPOLA_N"/>
    <property type="match status" value="1"/>
</dbReference>
<dbReference type="SUPFAM" id="SSF64484">
    <property type="entry name" value="beta and beta-prime subunits of DNA dependent RNA-polymerase"/>
    <property type="match status" value="1"/>
</dbReference>
<evidence type="ECO:0000255" key="1">
    <source>
        <dbReference type="HAMAP-Rule" id="MF_01322"/>
    </source>
</evidence>
<reference key="1">
    <citation type="journal article" date="2008" name="Infect. Immun.">
        <title>Genomic comparison of virulent Rickettsia rickettsii Sheila Smith and avirulent Rickettsia rickettsii Iowa.</title>
        <authorList>
            <person name="Ellison D.W."/>
            <person name="Clark T.R."/>
            <person name="Sturdevant D.E."/>
            <person name="Virtaneva K."/>
            <person name="Porcella S.F."/>
            <person name="Hackstadt T."/>
        </authorList>
    </citation>
    <scope>NUCLEOTIDE SEQUENCE [LARGE SCALE GENOMIC DNA]</scope>
    <source>
        <strain>Iowa</strain>
    </source>
</reference>
<organism>
    <name type="scientific">Rickettsia rickettsii (strain Iowa)</name>
    <dbReference type="NCBI Taxonomy" id="452659"/>
    <lineage>
        <taxon>Bacteria</taxon>
        <taxon>Pseudomonadati</taxon>
        <taxon>Pseudomonadota</taxon>
        <taxon>Alphaproteobacteria</taxon>
        <taxon>Rickettsiales</taxon>
        <taxon>Rickettsiaceae</taxon>
        <taxon>Rickettsieae</taxon>
        <taxon>Rickettsia</taxon>
        <taxon>spotted fever group</taxon>
    </lineage>
</organism>
<gene>
    <name evidence="1" type="primary">rpoC</name>
    <name type="ordered locus">RrIowa_0224</name>
</gene>
<name>RPOC_RICRO</name>
<accession>B0BWB0</accession>
<keyword id="KW-0240">DNA-directed RNA polymerase</keyword>
<keyword id="KW-0460">Magnesium</keyword>
<keyword id="KW-0479">Metal-binding</keyword>
<keyword id="KW-0548">Nucleotidyltransferase</keyword>
<keyword id="KW-0804">Transcription</keyword>
<keyword id="KW-0808">Transferase</keyword>
<keyword id="KW-0862">Zinc</keyword>
<proteinExistence type="inferred from homology"/>
<sequence>MSVVNFYGQLSNTQQFDQIRINIASPDQVRSWSFGEVTKPETINYRTFKPEKDGLFCARIFGPVKDYECLCGKYKRMKNRGITCEKCGVEVTVSRVRRERMGHIELAAPVAHIWFLKSLPSRISTLLDMTMRDVEKILYFENYVVVDPGLSILQKGELLTEEELQKAKDKYGEDAFTASIGAEVIQQMLKELDFSKLKQELYEELQTTSSEVKKKKLVKRLKLVENFLESENKPEWMIMDVLPVIPPEIRPLVMLDGGRFATSDLNELYRRVINRNNRLKKLIESKAPDIIVRNEKRMLQEAVDALFDNGRRGRAAKNANKRPFKSLSDMLKGKQGRFRQNLLGKRVDYSGRSVIVVGPELKLHQCGLPKKMALELFKPFIYSKLELYGIATTIKAAKRMVEAEKSEVWDVLEEVIREHPVLLNRAPTLHRLGIQAFEPLLIEGKAIQLHPLVCAAFNADFDGDQMAVHIPLSIEAQLEARVFMMSTNNILSPANGRPIIVPDKDIVLGLYYLTLAFDNEVGAGMMFSDLAEMEHALYNKFITIHTKIKYRRNQLNAEGKMVPVIIDTTYGRLMVGELLPSNPNIEFKFINKQLTKKDISLVIDLVYRHCGQKATVIFADQLMKLGFKYACSSGISFGMDDMVVPESKSTHINKTQLEIKEFEQQYSNGLITYGEKYNKVVDAWSRCTDRVANDMMKEIATLPVNDAPNHQKINAIYMMAISGARGSFQQIKQLGGMRGLMTKSNGQIIQTPIISNFKEGLTEFECFNSANGMRKGQIDTALKTASSGYLTRKLVDVAQDCIITEKDCGTDKGIEVKSVIEGGEVIVPLAEKILGRTAAIDIFHPVTNDLILNKGELINEAKLEQIESAGLDRIMIKSVLTCESTTGICSICYGRDLATGTLVSEGEAIGVIAAQSIGEPGTQLTMRTFHIGGAATKGAEVSSVDASYDAKVKIISRNVVINSEERKIVMSRNCELLLLDNHGNEKARHKIPYGARLLVDDGDMVIKTQKLAEWDPYTIPIITEKSGKVLFKDMVEGISIRDVTDEATGIPSKVIIESKQYSRGAELRPRIQLLDAKGEVITLSNGLEARYYLPVGAVLSVEDGVQISVGDIIARIPKESTTTKDITGGLPRVAELVEARRPKDHAVIAEIDGRVEFGKDYKSKRRIIIHPIDETMSIEYMVPKGKHVVVNEGDFVKKGDLLIDGNPVLQDILKVMGVEVLANYIVNEVQAVYRLQGVKIDDKHIEVIIRQMLQKVEVTDSGGTTLLAGEKIDRHEFDEINEKAIKNGLKPAEAQLILQGITKASLQTRSFISAASFQETTRVLTEAAIAGKVDKLRGLKENVIVGRLVPAGTGYFMDKMRKAAVKLDEENV</sequence>
<feature type="chain" id="PRO_0000353423" description="DNA-directed RNA polymerase subunit beta'">
    <location>
        <begin position="1"/>
        <end position="1372"/>
    </location>
</feature>
<feature type="binding site" evidence="1">
    <location>
        <position position="69"/>
    </location>
    <ligand>
        <name>Zn(2+)</name>
        <dbReference type="ChEBI" id="CHEBI:29105"/>
        <label>1</label>
    </ligand>
</feature>
<feature type="binding site" evidence="1">
    <location>
        <position position="71"/>
    </location>
    <ligand>
        <name>Zn(2+)</name>
        <dbReference type="ChEBI" id="CHEBI:29105"/>
        <label>1</label>
    </ligand>
</feature>
<feature type="binding site" evidence="1">
    <location>
        <position position="84"/>
    </location>
    <ligand>
        <name>Zn(2+)</name>
        <dbReference type="ChEBI" id="CHEBI:29105"/>
        <label>1</label>
    </ligand>
</feature>
<feature type="binding site" evidence="1">
    <location>
        <position position="87"/>
    </location>
    <ligand>
        <name>Zn(2+)</name>
        <dbReference type="ChEBI" id="CHEBI:29105"/>
        <label>1</label>
    </ligand>
</feature>
<feature type="binding site" evidence="1">
    <location>
        <position position="460"/>
    </location>
    <ligand>
        <name>Mg(2+)</name>
        <dbReference type="ChEBI" id="CHEBI:18420"/>
    </ligand>
</feature>
<feature type="binding site" evidence="1">
    <location>
        <position position="462"/>
    </location>
    <ligand>
        <name>Mg(2+)</name>
        <dbReference type="ChEBI" id="CHEBI:18420"/>
    </ligand>
</feature>
<feature type="binding site" evidence="1">
    <location>
        <position position="464"/>
    </location>
    <ligand>
        <name>Mg(2+)</name>
        <dbReference type="ChEBI" id="CHEBI:18420"/>
    </ligand>
</feature>
<feature type="binding site" evidence="1">
    <location>
        <position position="808"/>
    </location>
    <ligand>
        <name>Zn(2+)</name>
        <dbReference type="ChEBI" id="CHEBI:29105"/>
        <label>2</label>
    </ligand>
</feature>
<feature type="binding site" evidence="1">
    <location>
        <position position="882"/>
    </location>
    <ligand>
        <name>Zn(2+)</name>
        <dbReference type="ChEBI" id="CHEBI:29105"/>
        <label>2</label>
    </ligand>
</feature>
<feature type="binding site" evidence="1">
    <location>
        <position position="889"/>
    </location>
    <ligand>
        <name>Zn(2+)</name>
        <dbReference type="ChEBI" id="CHEBI:29105"/>
        <label>2</label>
    </ligand>
</feature>
<feature type="binding site" evidence="1">
    <location>
        <position position="892"/>
    </location>
    <ligand>
        <name>Zn(2+)</name>
        <dbReference type="ChEBI" id="CHEBI:29105"/>
        <label>2</label>
    </ligand>
</feature>